<gene>
    <name evidence="1" type="primary">kdsA</name>
    <name type="ordered locus">Nwi_1831</name>
</gene>
<evidence type="ECO:0000255" key="1">
    <source>
        <dbReference type="HAMAP-Rule" id="MF_00056"/>
    </source>
</evidence>
<proteinExistence type="inferred from homology"/>
<protein>
    <recommendedName>
        <fullName evidence="1">2-dehydro-3-deoxyphosphooctonate aldolase</fullName>
        <ecNumber evidence="1">2.5.1.55</ecNumber>
    </recommendedName>
    <alternativeName>
        <fullName evidence="1">3-deoxy-D-manno-octulosonic acid 8-phosphate synthase</fullName>
    </alternativeName>
    <alternativeName>
        <fullName evidence="1">KDO-8-phosphate synthase</fullName>
        <shortName evidence="1">KDO 8-P synthase</shortName>
        <shortName evidence="1">KDOPS</shortName>
    </alternativeName>
    <alternativeName>
        <fullName evidence="1">Phospho-2-dehydro-3-deoxyoctonate aldolase</fullName>
    </alternativeName>
</protein>
<organism>
    <name type="scientific">Nitrobacter winogradskyi (strain ATCC 25391 / DSM 10237 / CIP 104748 / NCIMB 11846 / Nb-255)</name>
    <dbReference type="NCBI Taxonomy" id="323098"/>
    <lineage>
        <taxon>Bacteria</taxon>
        <taxon>Pseudomonadati</taxon>
        <taxon>Pseudomonadota</taxon>
        <taxon>Alphaproteobacteria</taxon>
        <taxon>Hyphomicrobiales</taxon>
        <taxon>Nitrobacteraceae</taxon>
        <taxon>Nitrobacter</taxon>
    </lineage>
</organism>
<sequence>MNQPVSASPVVSVGSVTFGQDRPLSIIAGPCQMESRAHALEVAGALKDIAARLNVGLVFKTSFDKANRTSASGARGIGLKQALPVFADIRSSLGLPVLTDVHEAAQCAEVAQVVDVLQIPAFLCRQTDLLLAAAATGKVVNVKKGQFLAPWDMGNVVAKITGGGNRNILVTERGASFGYNTLVSDMRALPILARTTGAPVIFDATHSVQQPGGKGASTGGEREFVPVLARAAVAVGVAGVFIETHPDPDHAPSDGPNMVPLREFEALVRRLMAFDALAKAADPACPE</sequence>
<accession>Q3SRK0</accession>
<comment type="catalytic activity">
    <reaction evidence="1">
        <text>D-arabinose 5-phosphate + phosphoenolpyruvate + H2O = 3-deoxy-alpha-D-manno-2-octulosonate-8-phosphate + phosphate</text>
        <dbReference type="Rhea" id="RHEA:14053"/>
        <dbReference type="ChEBI" id="CHEBI:15377"/>
        <dbReference type="ChEBI" id="CHEBI:43474"/>
        <dbReference type="ChEBI" id="CHEBI:57693"/>
        <dbReference type="ChEBI" id="CHEBI:58702"/>
        <dbReference type="ChEBI" id="CHEBI:85985"/>
        <dbReference type="EC" id="2.5.1.55"/>
    </reaction>
</comment>
<comment type="pathway">
    <text evidence="1">Carbohydrate biosynthesis; 3-deoxy-D-manno-octulosonate biosynthesis; 3-deoxy-D-manno-octulosonate from D-ribulose 5-phosphate: step 2/3.</text>
</comment>
<comment type="pathway">
    <text evidence="1">Bacterial outer membrane biogenesis; lipopolysaccharide biosynthesis.</text>
</comment>
<comment type="subcellular location">
    <subcellularLocation>
        <location evidence="1">Cytoplasm</location>
    </subcellularLocation>
</comment>
<comment type="similarity">
    <text evidence="1">Belongs to the KdsA family.</text>
</comment>
<name>KDSA_NITWN</name>
<dbReference type="EC" id="2.5.1.55" evidence="1"/>
<dbReference type="EMBL" id="CP000115">
    <property type="protein sequence ID" value="ABA05091.1"/>
    <property type="molecule type" value="Genomic_DNA"/>
</dbReference>
<dbReference type="RefSeq" id="WP_011315087.1">
    <property type="nucleotide sequence ID" value="NC_007406.1"/>
</dbReference>
<dbReference type="SMR" id="Q3SRK0"/>
<dbReference type="STRING" id="323098.Nwi_1831"/>
<dbReference type="KEGG" id="nwi:Nwi_1831"/>
<dbReference type="eggNOG" id="COG2877">
    <property type="taxonomic scope" value="Bacteria"/>
</dbReference>
<dbReference type="HOGENOM" id="CLU_036666_0_0_5"/>
<dbReference type="OrthoDB" id="9776934at2"/>
<dbReference type="UniPathway" id="UPA00030"/>
<dbReference type="UniPathway" id="UPA00357">
    <property type="reaction ID" value="UER00474"/>
</dbReference>
<dbReference type="Proteomes" id="UP000002531">
    <property type="component" value="Chromosome"/>
</dbReference>
<dbReference type="GO" id="GO:0005737">
    <property type="term" value="C:cytoplasm"/>
    <property type="evidence" value="ECO:0007669"/>
    <property type="project" value="UniProtKB-SubCell"/>
</dbReference>
<dbReference type="GO" id="GO:0008676">
    <property type="term" value="F:3-deoxy-8-phosphooctulonate synthase activity"/>
    <property type="evidence" value="ECO:0007669"/>
    <property type="project" value="UniProtKB-UniRule"/>
</dbReference>
<dbReference type="GO" id="GO:0019294">
    <property type="term" value="P:keto-3-deoxy-D-manno-octulosonic acid biosynthetic process"/>
    <property type="evidence" value="ECO:0007669"/>
    <property type="project" value="UniProtKB-UniRule"/>
</dbReference>
<dbReference type="Gene3D" id="3.20.20.70">
    <property type="entry name" value="Aldolase class I"/>
    <property type="match status" value="1"/>
</dbReference>
<dbReference type="HAMAP" id="MF_00056">
    <property type="entry name" value="KDO8P_synth"/>
    <property type="match status" value="1"/>
</dbReference>
<dbReference type="InterPro" id="IPR013785">
    <property type="entry name" value="Aldolase_TIM"/>
</dbReference>
<dbReference type="InterPro" id="IPR006218">
    <property type="entry name" value="DAHP1/KDSA"/>
</dbReference>
<dbReference type="InterPro" id="IPR006269">
    <property type="entry name" value="KDO8P_synthase"/>
</dbReference>
<dbReference type="NCBIfam" id="TIGR01362">
    <property type="entry name" value="KDO8P_synth"/>
    <property type="match status" value="1"/>
</dbReference>
<dbReference type="NCBIfam" id="NF003543">
    <property type="entry name" value="PRK05198.1"/>
    <property type="match status" value="1"/>
</dbReference>
<dbReference type="PANTHER" id="PTHR21057">
    <property type="entry name" value="PHOSPHO-2-DEHYDRO-3-DEOXYHEPTONATE ALDOLASE"/>
    <property type="match status" value="1"/>
</dbReference>
<dbReference type="Pfam" id="PF00793">
    <property type="entry name" value="DAHP_synth_1"/>
    <property type="match status" value="1"/>
</dbReference>
<dbReference type="SUPFAM" id="SSF51569">
    <property type="entry name" value="Aldolase"/>
    <property type="match status" value="1"/>
</dbReference>
<reference key="1">
    <citation type="journal article" date="2006" name="Appl. Environ. Microbiol.">
        <title>Genome sequence of the chemolithoautotrophic nitrite-oxidizing bacterium Nitrobacter winogradskyi Nb-255.</title>
        <authorList>
            <person name="Starkenburg S.R."/>
            <person name="Chain P.S.G."/>
            <person name="Sayavedra-Soto L.A."/>
            <person name="Hauser L."/>
            <person name="Land M.L."/>
            <person name="Larimer F.W."/>
            <person name="Malfatti S.A."/>
            <person name="Klotz M.G."/>
            <person name="Bottomley P.J."/>
            <person name="Arp D.J."/>
            <person name="Hickey W.J."/>
        </authorList>
    </citation>
    <scope>NUCLEOTIDE SEQUENCE [LARGE SCALE GENOMIC DNA]</scope>
    <source>
        <strain>ATCC 25391 / DSM 10237 / CIP 104748 / NCIMB 11846 / Nb-255</strain>
    </source>
</reference>
<keyword id="KW-0963">Cytoplasm</keyword>
<keyword id="KW-0448">Lipopolysaccharide biosynthesis</keyword>
<keyword id="KW-1185">Reference proteome</keyword>
<keyword id="KW-0808">Transferase</keyword>
<feature type="chain" id="PRO_0000304463" description="2-dehydro-3-deoxyphosphooctonate aldolase">
    <location>
        <begin position="1"/>
        <end position="287"/>
    </location>
</feature>